<comment type="function">
    <text evidence="1">Plays a role in the negative regulation of host NF-kappa-B signaling pathway. Mechanistically, recruits IKKA/CHUK and IKBKB to suppress their kinase activity towards NFKBIA.</text>
</comment>
<comment type="subunit">
    <text evidence="1">Interacts with IKKA/CHUK and IKBKB.</text>
</comment>
<comment type="subcellular location">
    <subcellularLocation>
        <location evidence="1">Host cytoplasm</location>
    </subcellularLocation>
</comment>
<comment type="similarity">
    <text evidence="2">Belongs to the asfivirus D345L family.</text>
</comment>
<organism>
    <name type="scientific">African swine fever virus (isolate Tick/South Africa/Pretoriuskop Pr4/1996)</name>
    <name type="common">ASFV</name>
    <dbReference type="NCBI Taxonomy" id="561443"/>
    <lineage>
        <taxon>Viruses</taxon>
        <taxon>Varidnaviria</taxon>
        <taxon>Bamfordvirae</taxon>
        <taxon>Nucleocytoviricota</taxon>
        <taxon>Pokkesviricetes</taxon>
        <taxon>Asfuvirales</taxon>
        <taxon>Asfarviridae</taxon>
        <taxon>Asfivirus</taxon>
        <taxon>African swine fever virus</taxon>
    </lineage>
</organism>
<feature type="chain" id="PRO_0000373661" description="Protein D345L">
    <location>
        <begin position="1"/>
        <end position="345"/>
    </location>
</feature>
<protein>
    <recommendedName>
        <fullName>Protein D345L</fullName>
        <shortName>pD345L</shortName>
    </recommendedName>
</protein>
<proteinExistence type="inferred from homology"/>
<keyword id="KW-1035">Host cytoplasm</keyword>
<keyword id="KW-0945">Host-virus interaction</keyword>
<keyword id="KW-1100">Inhibition of host NF-kappa-B by virus</keyword>
<evidence type="ECO:0000250" key="1">
    <source>
        <dbReference type="UniProtKB" id="Q65182"/>
    </source>
</evidence>
<evidence type="ECO:0000305" key="2"/>
<organismHost>
    <name type="scientific">Ornithodoros</name>
    <name type="common">relapsing fever ticks</name>
    <dbReference type="NCBI Taxonomy" id="6937"/>
</organismHost>
<organismHost>
    <name type="scientific">Phacochoerus aethiopicus</name>
    <name type="common">Warthog</name>
    <dbReference type="NCBI Taxonomy" id="85517"/>
</organismHost>
<organismHost>
    <name type="scientific">Phacochoerus africanus</name>
    <name type="common">Warthog</name>
    <dbReference type="NCBI Taxonomy" id="41426"/>
</organismHost>
<organismHost>
    <name type="scientific">Potamochoerus larvatus</name>
    <name type="common">Bushpig</name>
    <dbReference type="NCBI Taxonomy" id="273792"/>
</organismHost>
<organismHost>
    <name type="scientific">Sus scrofa</name>
    <name type="common">Pig</name>
    <dbReference type="NCBI Taxonomy" id="9823"/>
</organismHost>
<sequence>METFVCLFKDSPQQRSDAWHAVRHTQVGGSDLASILGLNPYKSYYITLAEKANLFKKNLNRAACSWGTLFERVSKDLLELFCQTTVIGDNIHIDGTYLGYPGHSNSPDGFCYLTLGYTQQSWEIKTIFNNVCYEATKRIPVLVEIKSPYNRKIKNSVPSYYMPQIQSGLALSPPISMGIYVEAMFRVCGIHQLGWNSETNIDIHPPESMLPLAWGIITICSTQEHTEAPQDFGTLDAETFRQLLETLYQKDQYTIHYSMPYETACPEMPNVVGYFGWKVFIFQIIPVMKHPQFLKDKYPIIQQFLRDLHTIKASPSPMETYEKICCSEESPLSTEDIDNFTDMLT</sequence>
<gene>
    <name type="ordered locus">Pret-121</name>
</gene>
<reference key="1">
    <citation type="submission" date="2003-03" db="EMBL/GenBank/DDBJ databases">
        <title>African swine fever virus genomes.</title>
        <authorList>
            <person name="Kutish G.F."/>
            <person name="Rock D.L."/>
        </authorList>
    </citation>
    <scope>NUCLEOTIDE SEQUENCE [GENOMIC DNA]</scope>
</reference>
<accession>P0CAF1</accession>
<dbReference type="EMBL" id="AY261363">
    <property type="status" value="NOT_ANNOTATED_CDS"/>
    <property type="molecule type" value="Genomic_DNA"/>
</dbReference>
<dbReference type="Proteomes" id="UP000000859">
    <property type="component" value="Segment"/>
</dbReference>
<dbReference type="GO" id="GO:0030430">
    <property type="term" value="C:host cell cytoplasm"/>
    <property type="evidence" value="ECO:0007669"/>
    <property type="project" value="UniProtKB-SubCell"/>
</dbReference>
<dbReference type="GO" id="GO:0085034">
    <property type="term" value="P:symbiont-mediated suppression of host NF-kappaB cascade"/>
    <property type="evidence" value="ECO:0007669"/>
    <property type="project" value="UniProtKB-KW"/>
</dbReference>
<dbReference type="Gene3D" id="3.90.320.10">
    <property type="match status" value="1"/>
</dbReference>
<dbReference type="InterPro" id="IPR051703">
    <property type="entry name" value="NF-kappa-B_Signaling_Reg"/>
</dbReference>
<dbReference type="InterPro" id="IPR011604">
    <property type="entry name" value="PDDEXK-like_dom_sf"/>
</dbReference>
<dbReference type="InterPro" id="IPR011335">
    <property type="entry name" value="Restrct_endonuc-II-like"/>
</dbReference>
<dbReference type="InterPro" id="IPR019080">
    <property type="entry name" value="YqaJ_viral_recombinase"/>
</dbReference>
<dbReference type="PANTHER" id="PTHR46609">
    <property type="entry name" value="EXONUCLEASE, PHAGE-TYPE/RECB, C-TERMINAL DOMAIN-CONTAINING PROTEIN"/>
    <property type="match status" value="1"/>
</dbReference>
<dbReference type="PANTHER" id="PTHR46609:SF6">
    <property type="entry name" value="EXONUCLEASE, PHAGE-TYPE_RECB, C-TERMINAL DOMAIN-CONTAINING PROTEIN-RELATED"/>
    <property type="match status" value="1"/>
</dbReference>
<dbReference type="Pfam" id="PF09588">
    <property type="entry name" value="YqaJ"/>
    <property type="match status" value="1"/>
</dbReference>
<dbReference type="SUPFAM" id="SSF52980">
    <property type="entry name" value="Restriction endonuclease-like"/>
    <property type="match status" value="1"/>
</dbReference>
<name>VF345_ASFP4</name>